<evidence type="ECO:0000255" key="1"/>
<evidence type="ECO:0000305" key="2"/>
<reference key="1">
    <citation type="journal article" date="2005" name="Genomics">
        <title>The ribonuclease A superfamily of mammals and birds: identifying new members and tracing evolutionary histories.</title>
        <authorList>
            <person name="Cho S."/>
            <person name="Beintema J.J."/>
            <person name="Zhang J."/>
        </authorList>
    </citation>
    <scope>NUCLEOTIDE SEQUENCE [GENOMIC DNA]</scope>
    <source>
        <strain>Brown Norway</strain>
    </source>
</reference>
<name>RNS12_RAT</name>
<sequence>MILMVIVFLLLLFWENELTEDVVLTSMEHLHVDYPQSAVPLRYCNYMILQRVIREPDYTCRKVHVFIHERPQKINRICTSSKKMTCPNYSEIFCFQSDTKFRMTVCQLTGGSKYPACRYQISPTEGFVLVTCDDLGPVNFQGYVE</sequence>
<organism>
    <name type="scientific">Rattus norvegicus</name>
    <name type="common">Rat</name>
    <dbReference type="NCBI Taxonomy" id="10116"/>
    <lineage>
        <taxon>Eukaryota</taxon>
        <taxon>Metazoa</taxon>
        <taxon>Chordata</taxon>
        <taxon>Craniata</taxon>
        <taxon>Vertebrata</taxon>
        <taxon>Euteleostomi</taxon>
        <taxon>Mammalia</taxon>
        <taxon>Eutheria</taxon>
        <taxon>Euarchontoglires</taxon>
        <taxon>Glires</taxon>
        <taxon>Rodentia</taxon>
        <taxon>Myomorpha</taxon>
        <taxon>Muroidea</taxon>
        <taxon>Muridae</taxon>
        <taxon>Murinae</taxon>
        <taxon>Rattus</taxon>
    </lineage>
</organism>
<comment type="function">
    <text evidence="2">Does not exhibit any ribonuclease activity.</text>
</comment>
<comment type="subcellular location">
    <subcellularLocation>
        <location evidence="2">Secreted</location>
    </subcellularLocation>
</comment>
<comment type="similarity">
    <text evidence="2">Belongs to the pancreatic ribonuclease family.</text>
</comment>
<keyword id="KW-0325">Glycoprotein</keyword>
<keyword id="KW-1185">Reference proteome</keyword>
<keyword id="KW-0964">Secreted</keyword>
<keyword id="KW-0732">Signal</keyword>
<protein>
    <recommendedName>
        <fullName>Probable inactive ribonuclease-like protein 12</fullName>
    </recommendedName>
</protein>
<dbReference type="EMBL" id="AY665835">
    <property type="protein sequence ID" value="AAV87201.1"/>
    <property type="molecule type" value="Genomic_DNA"/>
</dbReference>
<dbReference type="RefSeq" id="NP_001012209.1">
    <property type="nucleotide sequence ID" value="NM_001012209.2"/>
</dbReference>
<dbReference type="RefSeq" id="XP_008768779.1">
    <property type="nucleotide sequence ID" value="XM_008770557.3"/>
</dbReference>
<dbReference type="RefSeq" id="XP_008768780.1">
    <property type="nucleotide sequence ID" value="XM_008770558.2"/>
</dbReference>
<dbReference type="RefSeq" id="XP_017455250.1">
    <property type="nucleotide sequence ID" value="XM_017599761.1"/>
</dbReference>
<dbReference type="SMR" id="Q5GAL8"/>
<dbReference type="FunCoup" id="Q5GAL8">
    <property type="interactions" value="1"/>
</dbReference>
<dbReference type="STRING" id="10116.ENSRNOP00000060090"/>
<dbReference type="GlyCosmos" id="Q5GAL8">
    <property type="glycosylation" value="1 site, No reported glycans"/>
</dbReference>
<dbReference type="GlyGen" id="Q5GAL8">
    <property type="glycosylation" value="2 sites"/>
</dbReference>
<dbReference type="PaxDb" id="10116-ENSRNOP00000060090"/>
<dbReference type="Ensembl" id="ENSRNOT00000064936.2">
    <property type="protein sequence ID" value="ENSRNOP00000060090.1"/>
    <property type="gene ID" value="ENSRNOG00000042612.2"/>
</dbReference>
<dbReference type="GeneID" id="364302"/>
<dbReference type="KEGG" id="rno:364302"/>
<dbReference type="UCSC" id="RGD:1307829">
    <property type="organism name" value="rat"/>
</dbReference>
<dbReference type="AGR" id="RGD:1307829"/>
<dbReference type="CTD" id="493901"/>
<dbReference type="RGD" id="1307829">
    <property type="gene designation" value="Rnase12"/>
</dbReference>
<dbReference type="eggNOG" id="ENOG502T3VJ">
    <property type="taxonomic scope" value="Eukaryota"/>
</dbReference>
<dbReference type="GeneTree" id="ENSGT00730000111478"/>
<dbReference type="HOGENOM" id="CLU_117006_1_0_1"/>
<dbReference type="InParanoid" id="Q5GAL8"/>
<dbReference type="OMA" id="KHVFIHE"/>
<dbReference type="OrthoDB" id="9824991at2759"/>
<dbReference type="PhylomeDB" id="Q5GAL8"/>
<dbReference type="TreeFam" id="TF333393"/>
<dbReference type="PRO" id="PR:Q5GAL8"/>
<dbReference type="Proteomes" id="UP000002494">
    <property type="component" value="Chromosome 15"/>
</dbReference>
<dbReference type="Bgee" id="ENSRNOG00000042612">
    <property type="expression patterns" value="Expressed in testis and 4 other cell types or tissues"/>
</dbReference>
<dbReference type="ExpressionAtlas" id="Q5GAL8">
    <property type="expression patterns" value="baseline and differential"/>
</dbReference>
<dbReference type="GO" id="GO:0005576">
    <property type="term" value="C:extracellular region"/>
    <property type="evidence" value="ECO:0007669"/>
    <property type="project" value="UniProtKB-SubCell"/>
</dbReference>
<dbReference type="GO" id="GO:0003676">
    <property type="term" value="F:nucleic acid binding"/>
    <property type="evidence" value="ECO:0007669"/>
    <property type="project" value="InterPro"/>
</dbReference>
<dbReference type="GO" id="GO:0004540">
    <property type="term" value="F:RNA nuclease activity"/>
    <property type="evidence" value="ECO:0000318"/>
    <property type="project" value="GO_Central"/>
</dbReference>
<dbReference type="GO" id="GO:0050830">
    <property type="term" value="P:defense response to Gram-positive bacterium"/>
    <property type="evidence" value="ECO:0000318"/>
    <property type="project" value="GO_Central"/>
</dbReference>
<dbReference type="CDD" id="cd00163">
    <property type="entry name" value="RNase_A"/>
    <property type="match status" value="1"/>
</dbReference>
<dbReference type="FunFam" id="3.10.130.10:FF:000002">
    <property type="entry name" value="Inactive ribonuclease-like protein 10"/>
    <property type="match status" value="1"/>
</dbReference>
<dbReference type="Gene3D" id="3.10.130.10">
    <property type="entry name" value="Ribonuclease A-like domain"/>
    <property type="match status" value="1"/>
</dbReference>
<dbReference type="InterPro" id="IPR001427">
    <property type="entry name" value="RNaseA"/>
</dbReference>
<dbReference type="InterPro" id="IPR036816">
    <property type="entry name" value="RNaseA-like_dom_sf"/>
</dbReference>
<dbReference type="InterPro" id="IPR023412">
    <property type="entry name" value="RNaseA_domain"/>
</dbReference>
<dbReference type="PANTHER" id="PTHR11437:SF20">
    <property type="entry name" value="INACTIVE RIBONUCLEASE-LIKE PROTEIN 12-RELATED"/>
    <property type="match status" value="1"/>
</dbReference>
<dbReference type="PANTHER" id="PTHR11437">
    <property type="entry name" value="RIBONUCLEASE"/>
    <property type="match status" value="1"/>
</dbReference>
<dbReference type="Pfam" id="PF00074">
    <property type="entry name" value="RnaseA"/>
    <property type="match status" value="1"/>
</dbReference>
<dbReference type="PRINTS" id="PR00794">
    <property type="entry name" value="RIBONUCLEASE"/>
</dbReference>
<dbReference type="SMART" id="SM00092">
    <property type="entry name" value="RNAse_Pc"/>
    <property type="match status" value="1"/>
</dbReference>
<dbReference type="SUPFAM" id="SSF54076">
    <property type="entry name" value="RNase A-like"/>
    <property type="match status" value="1"/>
</dbReference>
<accession>Q5GAL8</accession>
<gene>
    <name type="primary">Rnase12</name>
</gene>
<feature type="signal peptide" evidence="1">
    <location>
        <begin position="1"/>
        <end position="19"/>
    </location>
</feature>
<feature type="chain" id="PRO_0000308704" description="Probable inactive ribonuclease-like protein 12">
    <location>
        <begin position="20"/>
        <end position="145"/>
    </location>
</feature>
<feature type="glycosylation site" description="N-linked (GlcNAc...) asparagine" evidence="1">
    <location>
        <position position="88"/>
    </location>
</feature>
<proteinExistence type="inferred from homology"/>